<protein>
    <recommendedName>
        <fullName evidence="1">Chromosomal replication initiator protein DnaA</fullName>
    </recommendedName>
</protein>
<gene>
    <name evidence="1" type="primary">dnaA</name>
    <name type="ordered locus">LEPBI_I0001</name>
</gene>
<feature type="chain" id="PRO_1000121995" description="Chromosomal replication initiator protein DnaA">
    <location>
        <begin position="1"/>
        <end position="441"/>
    </location>
</feature>
<feature type="region of interest" description="Domain I, interacts with DnaA modulators" evidence="1">
    <location>
        <begin position="1"/>
        <end position="71"/>
    </location>
</feature>
<feature type="region of interest" description="Domain II" evidence="1">
    <location>
        <begin position="71"/>
        <end position="99"/>
    </location>
</feature>
<feature type="region of interest" description="Domain III, AAA+ region" evidence="1">
    <location>
        <begin position="100"/>
        <end position="318"/>
    </location>
</feature>
<feature type="region of interest" description="Domain IV, binds dsDNA" evidence="1">
    <location>
        <begin position="319"/>
        <end position="441"/>
    </location>
</feature>
<feature type="binding site" evidence="1">
    <location>
        <position position="143"/>
    </location>
    <ligand>
        <name>ATP</name>
        <dbReference type="ChEBI" id="CHEBI:30616"/>
    </ligand>
</feature>
<feature type="binding site" evidence="1">
    <location>
        <position position="145"/>
    </location>
    <ligand>
        <name>ATP</name>
        <dbReference type="ChEBI" id="CHEBI:30616"/>
    </ligand>
</feature>
<feature type="binding site" evidence="1">
    <location>
        <position position="146"/>
    </location>
    <ligand>
        <name>ATP</name>
        <dbReference type="ChEBI" id="CHEBI:30616"/>
    </ligand>
</feature>
<feature type="binding site" evidence="1">
    <location>
        <position position="147"/>
    </location>
    <ligand>
        <name>ATP</name>
        <dbReference type="ChEBI" id="CHEBI:30616"/>
    </ligand>
</feature>
<organism>
    <name type="scientific">Leptospira biflexa serovar Patoc (strain Patoc 1 / ATCC 23582 / Paris)</name>
    <dbReference type="NCBI Taxonomy" id="456481"/>
    <lineage>
        <taxon>Bacteria</taxon>
        <taxon>Pseudomonadati</taxon>
        <taxon>Spirochaetota</taxon>
        <taxon>Spirochaetia</taxon>
        <taxon>Leptospirales</taxon>
        <taxon>Leptospiraceae</taxon>
        <taxon>Leptospira</taxon>
    </lineage>
</organism>
<name>DNAA_LEPBP</name>
<evidence type="ECO:0000255" key="1">
    <source>
        <dbReference type="HAMAP-Rule" id="MF_00377"/>
    </source>
</evidence>
<accession>B0SK31</accession>
<dbReference type="EMBL" id="CP000786">
    <property type="protein sequence ID" value="ABZ96148.1"/>
    <property type="molecule type" value="Genomic_DNA"/>
</dbReference>
<dbReference type="RefSeq" id="WP_012387039.1">
    <property type="nucleotide sequence ID" value="NC_010602.1"/>
</dbReference>
<dbReference type="SMR" id="B0SK31"/>
<dbReference type="STRING" id="456481.LEPBI_I0001"/>
<dbReference type="KEGG" id="lbi:LEPBI_I0001"/>
<dbReference type="HOGENOM" id="CLU_026910_3_2_12"/>
<dbReference type="OrthoDB" id="9807019at2"/>
<dbReference type="BioCyc" id="LBIF456481:LEPBI_RS00020-MONOMER"/>
<dbReference type="Proteomes" id="UP000001847">
    <property type="component" value="Chromosome I"/>
</dbReference>
<dbReference type="GO" id="GO:0005737">
    <property type="term" value="C:cytoplasm"/>
    <property type="evidence" value="ECO:0007669"/>
    <property type="project" value="UniProtKB-SubCell"/>
</dbReference>
<dbReference type="GO" id="GO:0005886">
    <property type="term" value="C:plasma membrane"/>
    <property type="evidence" value="ECO:0007669"/>
    <property type="project" value="TreeGrafter"/>
</dbReference>
<dbReference type="GO" id="GO:0005524">
    <property type="term" value="F:ATP binding"/>
    <property type="evidence" value="ECO:0007669"/>
    <property type="project" value="UniProtKB-UniRule"/>
</dbReference>
<dbReference type="GO" id="GO:0016887">
    <property type="term" value="F:ATP hydrolysis activity"/>
    <property type="evidence" value="ECO:0007669"/>
    <property type="project" value="InterPro"/>
</dbReference>
<dbReference type="GO" id="GO:0003688">
    <property type="term" value="F:DNA replication origin binding"/>
    <property type="evidence" value="ECO:0007669"/>
    <property type="project" value="UniProtKB-UniRule"/>
</dbReference>
<dbReference type="GO" id="GO:0008289">
    <property type="term" value="F:lipid binding"/>
    <property type="evidence" value="ECO:0007669"/>
    <property type="project" value="UniProtKB-KW"/>
</dbReference>
<dbReference type="GO" id="GO:0006270">
    <property type="term" value="P:DNA replication initiation"/>
    <property type="evidence" value="ECO:0007669"/>
    <property type="project" value="UniProtKB-UniRule"/>
</dbReference>
<dbReference type="GO" id="GO:0006275">
    <property type="term" value="P:regulation of DNA replication"/>
    <property type="evidence" value="ECO:0007669"/>
    <property type="project" value="UniProtKB-UniRule"/>
</dbReference>
<dbReference type="CDD" id="cd00009">
    <property type="entry name" value="AAA"/>
    <property type="match status" value="1"/>
</dbReference>
<dbReference type="CDD" id="cd06571">
    <property type="entry name" value="Bac_DnaA_C"/>
    <property type="match status" value="1"/>
</dbReference>
<dbReference type="FunFam" id="3.40.50.300:FF:000668">
    <property type="entry name" value="Chromosomal replication initiator protein DnaA"/>
    <property type="match status" value="1"/>
</dbReference>
<dbReference type="Gene3D" id="1.10.1750.10">
    <property type="match status" value="1"/>
</dbReference>
<dbReference type="Gene3D" id="1.10.8.60">
    <property type="match status" value="1"/>
</dbReference>
<dbReference type="Gene3D" id="3.30.300.180">
    <property type="match status" value="1"/>
</dbReference>
<dbReference type="Gene3D" id="3.40.50.300">
    <property type="entry name" value="P-loop containing nucleotide triphosphate hydrolases"/>
    <property type="match status" value="1"/>
</dbReference>
<dbReference type="HAMAP" id="MF_00377">
    <property type="entry name" value="DnaA_bact"/>
    <property type="match status" value="1"/>
</dbReference>
<dbReference type="InterPro" id="IPR003593">
    <property type="entry name" value="AAA+_ATPase"/>
</dbReference>
<dbReference type="InterPro" id="IPR001957">
    <property type="entry name" value="Chromosome_initiator_DnaA"/>
</dbReference>
<dbReference type="InterPro" id="IPR020591">
    <property type="entry name" value="Chromosome_initiator_DnaA-like"/>
</dbReference>
<dbReference type="InterPro" id="IPR013159">
    <property type="entry name" value="DnaA_C"/>
</dbReference>
<dbReference type="InterPro" id="IPR013317">
    <property type="entry name" value="DnaA_dom"/>
</dbReference>
<dbReference type="InterPro" id="IPR024633">
    <property type="entry name" value="DnaA_N_dom"/>
</dbReference>
<dbReference type="InterPro" id="IPR038454">
    <property type="entry name" value="DnaA_N_sf"/>
</dbReference>
<dbReference type="InterPro" id="IPR027417">
    <property type="entry name" value="P-loop_NTPase"/>
</dbReference>
<dbReference type="InterPro" id="IPR010921">
    <property type="entry name" value="Trp_repressor/repl_initiator"/>
</dbReference>
<dbReference type="NCBIfam" id="TIGR00362">
    <property type="entry name" value="DnaA"/>
    <property type="match status" value="1"/>
</dbReference>
<dbReference type="PANTHER" id="PTHR30050">
    <property type="entry name" value="CHROMOSOMAL REPLICATION INITIATOR PROTEIN DNAA"/>
    <property type="match status" value="1"/>
</dbReference>
<dbReference type="PANTHER" id="PTHR30050:SF2">
    <property type="entry name" value="CHROMOSOMAL REPLICATION INITIATOR PROTEIN DNAA"/>
    <property type="match status" value="1"/>
</dbReference>
<dbReference type="Pfam" id="PF00308">
    <property type="entry name" value="Bac_DnaA"/>
    <property type="match status" value="1"/>
</dbReference>
<dbReference type="Pfam" id="PF08299">
    <property type="entry name" value="Bac_DnaA_C"/>
    <property type="match status" value="1"/>
</dbReference>
<dbReference type="Pfam" id="PF11638">
    <property type="entry name" value="DnaA_N"/>
    <property type="match status" value="1"/>
</dbReference>
<dbReference type="PRINTS" id="PR00051">
    <property type="entry name" value="DNAA"/>
</dbReference>
<dbReference type="SMART" id="SM00382">
    <property type="entry name" value="AAA"/>
    <property type="match status" value="1"/>
</dbReference>
<dbReference type="SMART" id="SM00760">
    <property type="entry name" value="Bac_DnaA_C"/>
    <property type="match status" value="1"/>
</dbReference>
<dbReference type="SUPFAM" id="SSF52540">
    <property type="entry name" value="P-loop containing nucleoside triphosphate hydrolases"/>
    <property type="match status" value="1"/>
</dbReference>
<dbReference type="SUPFAM" id="SSF48295">
    <property type="entry name" value="TrpR-like"/>
    <property type="match status" value="1"/>
</dbReference>
<comment type="function">
    <text evidence="1">Plays an essential role in the initiation and regulation of chromosomal replication. ATP-DnaA binds to the origin of replication (oriC) to initiate formation of the DNA replication initiation complex once per cell cycle. Binds the DnaA box (a 9 base pair repeat at the origin) and separates the double-stranded (ds)DNA. Forms a right-handed helical filament on oriC DNA; dsDNA binds to the exterior of the filament while single-stranded (ss)DNA is stabiized in the filament's interior. The ATP-DnaA-oriC complex binds and stabilizes one strand of the AT-rich DNA unwinding element (DUE), permitting loading of DNA polymerase. After initiation quickly degrades to an ADP-DnaA complex that is not apt for DNA replication. Binds acidic phospholipids.</text>
</comment>
<comment type="subunit">
    <text evidence="1">Oligomerizes as a right-handed, spiral filament on DNA at oriC.</text>
</comment>
<comment type="subcellular location">
    <subcellularLocation>
        <location evidence="1">Cytoplasm</location>
    </subcellularLocation>
</comment>
<comment type="domain">
    <text evidence="1">Domain I is involved in oligomerization and binding regulators, domain II is flexibile and of varying length in different bacteria, domain III forms the AAA+ region, while domain IV binds dsDNA.</text>
</comment>
<comment type="similarity">
    <text evidence="1">Belongs to the DnaA family.</text>
</comment>
<keyword id="KW-0067">ATP-binding</keyword>
<keyword id="KW-0963">Cytoplasm</keyword>
<keyword id="KW-0235">DNA replication</keyword>
<keyword id="KW-0238">DNA-binding</keyword>
<keyword id="KW-0446">Lipid-binding</keyword>
<keyword id="KW-0547">Nucleotide-binding</keyword>
<keyword id="KW-1185">Reference proteome</keyword>
<sequence length="441" mass="51326">MDIRWEEILEEISKQIPPKYFSNFIAPLRFDKWENQVVHLMAPSGGIKRHVETKYIGFIEDAVYQVVGDRFKVSILTESETSSHVLKEVIQSKFDDSDSDLNPEYIFSNYITSDSNRIAFTAAKSVVEQPGKYNPLYLFGPVGVGKTHLLHSIGNEIKKKDPWKTVRYVNSTSFLNEFIFTVRQNNRESLESFKIRYQSYNVLLFDDIQFLNGGAEKTQEEFFALFNFLYDRKRQIVIASDRPSYELPLHDRLKSRFVHGLQADIKSHDLELRKSLLKSNFSEFNIPASDNLLHWLAERLEGDSRALIGIVNDLVMYKKAYEYFLLTEDKIKEIAEARFLTNKKRIGFSPDMVIDLVCERTNVARKDLLGKSRKADFIPPRHLCMLLLHDVLNVPKAQIGRIFSTTHSTVIHGIDKFKERMKSEAQWEDLFHTIKHKISFQ</sequence>
<proteinExistence type="inferred from homology"/>
<reference key="1">
    <citation type="journal article" date="2008" name="PLoS ONE">
        <title>Genome sequence of the saprophyte Leptospira biflexa provides insights into the evolution of Leptospira and the pathogenesis of leptospirosis.</title>
        <authorList>
            <person name="Picardeau M."/>
            <person name="Bulach D.M."/>
            <person name="Bouchier C."/>
            <person name="Zuerner R.L."/>
            <person name="Zidane N."/>
            <person name="Wilson P.J."/>
            <person name="Creno S."/>
            <person name="Kuczek E.S."/>
            <person name="Bommezzadri S."/>
            <person name="Davis J.C."/>
            <person name="McGrath A."/>
            <person name="Johnson M.J."/>
            <person name="Boursaux-Eude C."/>
            <person name="Seemann T."/>
            <person name="Rouy Z."/>
            <person name="Coppel R.L."/>
            <person name="Rood J.I."/>
            <person name="Lajus A."/>
            <person name="Davies J.K."/>
            <person name="Medigue C."/>
            <person name="Adler B."/>
        </authorList>
    </citation>
    <scope>NUCLEOTIDE SEQUENCE [LARGE SCALE GENOMIC DNA]</scope>
    <source>
        <strain>Patoc 1 / ATCC 23582 / Paris</strain>
    </source>
</reference>